<reference key="1">
    <citation type="submission" date="2002-12" db="EMBL/GenBank/DDBJ databases">
        <title>Isolation and characterization of the recA gene of the marine bacterium Vibrio natriegens.</title>
        <authorList>
            <person name="Mead S."/>
            <person name="Thomas S.M."/>
        </authorList>
    </citation>
    <scope>NUCLEOTIDE SEQUENCE [GENOMIC DNA]</scope>
    <source>
        <strain>PJ164</strain>
    </source>
</reference>
<dbReference type="EMBL" id="AY198129">
    <property type="protein sequence ID" value="AAO18662.1"/>
    <property type="molecule type" value="Genomic_DNA"/>
</dbReference>
<dbReference type="SMR" id="Q6XZ07"/>
<dbReference type="STRING" id="691.BA893_13225"/>
<dbReference type="GO" id="GO:0005829">
    <property type="term" value="C:cytosol"/>
    <property type="evidence" value="ECO:0007669"/>
    <property type="project" value="TreeGrafter"/>
</dbReference>
<dbReference type="GO" id="GO:0005524">
    <property type="term" value="F:ATP binding"/>
    <property type="evidence" value="ECO:0007669"/>
    <property type="project" value="UniProtKB-UniRule"/>
</dbReference>
<dbReference type="GO" id="GO:0016887">
    <property type="term" value="F:ATP hydrolysis activity"/>
    <property type="evidence" value="ECO:0007669"/>
    <property type="project" value="InterPro"/>
</dbReference>
<dbReference type="GO" id="GO:0140664">
    <property type="term" value="F:ATP-dependent DNA damage sensor activity"/>
    <property type="evidence" value="ECO:0007669"/>
    <property type="project" value="InterPro"/>
</dbReference>
<dbReference type="GO" id="GO:0003684">
    <property type="term" value="F:damaged DNA binding"/>
    <property type="evidence" value="ECO:0007669"/>
    <property type="project" value="UniProtKB-UniRule"/>
</dbReference>
<dbReference type="GO" id="GO:0003697">
    <property type="term" value="F:single-stranded DNA binding"/>
    <property type="evidence" value="ECO:0007669"/>
    <property type="project" value="UniProtKB-UniRule"/>
</dbReference>
<dbReference type="GO" id="GO:0006310">
    <property type="term" value="P:DNA recombination"/>
    <property type="evidence" value="ECO:0007669"/>
    <property type="project" value="UniProtKB-UniRule"/>
</dbReference>
<dbReference type="GO" id="GO:0006281">
    <property type="term" value="P:DNA repair"/>
    <property type="evidence" value="ECO:0007669"/>
    <property type="project" value="UniProtKB-UniRule"/>
</dbReference>
<dbReference type="GO" id="GO:0009432">
    <property type="term" value="P:SOS response"/>
    <property type="evidence" value="ECO:0007669"/>
    <property type="project" value="UniProtKB-UniRule"/>
</dbReference>
<dbReference type="CDD" id="cd00983">
    <property type="entry name" value="RecA"/>
    <property type="match status" value="1"/>
</dbReference>
<dbReference type="FunFam" id="3.40.50.300:FF:000087">
    <property type="entry name" value="Recombinase RecA"/>
    <property type="match status" value="1"/>
</dbReference>
<dbReference type="Gene3D" id="3.40.50.300">
    <property type="entry name" value="P-loop containing nucleotide triphosphate hydrolases"/>
    <property type="match status" value="1"/>
</dbReference>
<dbReference type="HAMAP" id="MF_00268">
    <property type="entry name" value="RecA"/>
    <property type="match status" value="1"/>
</dbReference>
<dbReference type="InterPro" id="IPR003593">
    <property type="entry name" value="AAA+_ATPase"/>
</dbReference>
<dbReference type="InterPro" id="IPR013765">
    <property type="entry name" value="DNA_recomb/repair_RecA"/>
</dbReference>
<dbReference type="InterPro" id="IPR020584">
    <property type="entry name" value="DNA_recomb/repair_RecA_CS"/>
</dbReference>
<dbReference type="InterPro" id="IPR027417">
    <property type="entry name" value="P-loop_NTPase"/>
</dbReference>
<dbReference type="InterPro" id="IPR049261">
    <property type="entry name" value="RecA-like_C"/>
</dbReference>
<dbReference type="InterPro" id="IPR049428">
    <property type="entry name" value="RecA-like_N"/>
</dbReference>
<dbReference type="InterPro" id="IPR020588">
    <property type="entry name" value="RecA_ATP-bd"/>
</dbReference>
<dbReference type="InterPro" id="IPR023400">
    <property type="entry name" value="RecA_C_sf"/>
</dbReference>
<dbReference type="InterPro" id="IPR020587">
    <property type="entry name" value="RecA_monomer-monomer_interface"/>
</dbReference>
<dbReference type="NCBIfam" id="TIGR02012">
    <property type="entry name" value="tigrfam_recA"/>
    <property type="match status" value="1"/>
</dbReference>
<dbReference type="PANTHER" id="PTHR45900:SF1">
    <property type="entry name" value="MITOCHONDRIAL DNA REPAIR PROTEIN RECA HOMOLOG-RELATED"/>
    <property type="match status" value="1"/>
</dbReference>
<dbReference type="PANTHER" id="PTHR45900">
    <property type="entry name" value="RECA"/>
    <property type="match status" value="1"/>
</dbReference>
<dbReference type="Pfam" id="PF00154">
    <property type="entry name" value="RecA"/>
    <property type="match status" value="1"/>
</dbReference>
<dbReference type="Pfam" id="PF21096">
    <property type="entry name" value="RecA_C"/>
    <property type="match status" value="1"/>
</dbReference>
<dbReference type="PRINTS" id="PR00142">
    <property type="entry name" value="RECA"/>
</dbReference>
<dbReference type="SMART" id="SM00382">
    <property type="entry name" value="AAA"/>
    <property type="match status" value="1"/>
</dbReference>
<dbReference type="SUPFAM" id="SSF52540">
    <property type="entry name" value="P-loop containing nucleoside triphosphate hydrolases"/>
    <property type="match status" value="1"/>
</dbReference>
<dbReference type="SUPFAM" id="SSF54752">
    <property type="entry name" value="RecA protein, C-terminal domain"/>
    <property type="match status" value="1"/>
</dbReference>
<dbReference type="PROSITE" id="PS00321">
    <property type="entry name" value="RECA_1"/>
    <property type="match status" value="1"/>
</dbReference>
<dbReference type="PROSITE" id="PS50162">
    <property type="entry name" value="RECA_2"/>
    <property type="match status" value="1"/>
</dbReference>
<dbReference type="PROSITE" id="PS50163">
    <property type="entry name" value="RECA_3"/>
    <property type="match status" value="1"/>
</dbReference>
<name>RECA_VIBNA</name>
<sequence length="348" mass="37556">MDENKQKALAAALGQIEKQFGKGSIMRLGDNRAMDVETISTGSLSLDIALGAGGLPMGRIVEVYGPESSGKTTLTLELIAAAQREGKTCAFIDAEHALDPVYAKKLGVDIDALLVSQPDTGEQALEICDALARSGAIDVMVVDSVAALTPKAEIEGEMGDSHMGLQARMLSQAMRKLTGNLKQSNCMCIFIKQIRMKIGVMFGNPETTTGGNALKFYASVRLDIRRTGAIKEGDEVVGNETRIKVVKNKIAAPFKEANTQIMYGQGFNREGELVDLGVKHKLVEKAGAWYSYNGDKIGQGKANACNYLREHTEVAQTIDKKLREMLLSPAVAEGPEAGEMPEKKEEEF</sequence>
<comment type="function">
    <text evidence="1">Can catalyze the hydrolysis of ATP in the presence of single-stranded DNA, the ATP-dependent uptake of single-stranded DNA by duplex DNA, and the ATP-dependent hybridization of homologous single-stranded DNAs. It interacts with LexA causing its activation and leading to its autocatalytic cleavage.</text>
</comment>
<comment type="subcellular location">
    <subcellularLocation>
        <location evidence="1">Cytoplasm</location>
    </subcellularLocation>
</comment>
<comment type="similarity">
    <text evidence="1">Belongs to the RecA family.</text>
</comment>
<evidence type="ECO:0000255" key="1">
    <source>
        <dbReference type="HAMAP-Rule" id="MF_00268"/>
    </source>
</evidence>
<organism>
    <name type="scientific">Vibrio natriegens</name>
    <dbReference type="NCBI Taxonomy" id="691"/>
    <lineage>
        <taxon>Bacteria</taxon>
        <taxon>Pseudomonadati</taxon>
        <taxon>Pseudomonadota</taxon>
        <taxon>Gammaproteobacteria</taxon>
        <taxon>Vibrionales</taxon>
        <taxon>Vibrionaceae</taxon>
        <taxon>Vibrio</taxon>
    </lineage>
</organism>
<accession>Q6XZ07</accession>
<proteinExistence type="inferred from homology"/>
<feature type="chain" id="PRO_0000122893" description="Protein RecA">
    <location>
        <begin position="1"/>
        <end position="348"/>
    </location>
</feature>
<feature type="binding site" evidence="1">
    <location>
        <begin position="65"/>
        <end position="72"/>
    </location>
    <ligand>
        <name>ATP</name>
        <dbReference type="ChEBI" id="CHEBI:30616"/>
    </ligand>
</feature>
<gene>
    <name evidence="1" type="primary">recA</name>
</gene>
<protein>
    <recommendedName>
        <fullName evidence="1">Protein RecA</fullName>
    </recommendedName>
    <alternativeName>
        <fullName evidence="1">Recombinase A</fullName>
    </alternativeName>
</protein>
<keyword id="KW-0067">ATP-binding</keyword>
<keyword id="KW-0963">Cytoplasm</keyword>
<keyword id="KW-0227">DNA damage</keyword>
<keyword id="KW-0233">DNA recombination</keyword>
<keyword id="KW-0234">DNA repair</keyword>
<keyword id="KW-0238">DNA-binding</keyword>
<keyword id="KW-0547">Nucleotide-binding</keyword>
<keyword id="KW-0742">SOS response</keyword>